<name>HSLU_BURCM</name>
<accession>Q0BAX8</accession>
<feature type="chain" id="PRO_1000012713" description="ATP-dependent protease ATPase subunit HslU">
    <location>
        <begin position="1"/>
        <end position="447"/>
    </location>
</feature>
<feature type="binding site" evidence="1">
    <location>
        <position position="18"/>
    </location>
    <ligand>
        <name>ATP</name>
        <dbReference type="ChEBI" id="CHEBI:30616"/>
    </ligand>
</feature>
<feature type="binding site" evidence="1">
    <location>
        <begin position="60"/>
        <end position="65"/>
    </location>
    <ligand>
        <name>ATP</name>
        <dbReference type="ChEBI" id="CHEBI:30616"/>
    </ligand>
</feature>
<feature type="binding site" evidence="1">
    <location>
        <position position="259"/>
    </location>
    <ligand>
        <name>ATP</name>
        <dbReference type="ChEBI" id="CHEBI:30616"/>
    </ligand>
</feature>
<feature type="binding site" evidence="1">
    <location>
        <position position="325"/>
    </location>
    <ligand>
        <name>ATP</name>
        <dbReference type="ChEBI" id="CHEBI:30616"/>
    </ligand>
</feature>
<feature type="binding site" evidence="1">
    <location>
        <position position="397"/>
    </location>
    <ligand>
        <name>ATP</name>
        <dbReference type="ChEBI" id="CHEBI:30616"/>
    </ligand>
</feature>
<organism>
    <name type="scientific">Burkholderia ambifaria (strain ATCC BAA-244 / DSM 16087 / CCUG 44356 / LMG 19182 / AMMD)</name>
    <name type="common">Burkholderia cepacia (strain AMMD)</name>
    <dbReference type="NCBI Taxonomy" id="339670"/>
    <lineage>
        <taxon>Bacteria</taxon>
        <taxon>Pseudomonadati</taxon>
        <taxon>Pseudomonadota</taxon>
        <taxon>Betaproteobacteria</taxon>
        <taxon>Burkholderiales</taxon>
        <taxon>Burkholderiaceae</taxon>
        <taxon>Burkholderia</taxon>
        <taxon>Burkholderia cepacia complex</taxon>
    </lineage>
</organism>
<reference key="1">
    <citation type="submission" date="2006-08" db="EMBL/GenBank/DDBJ databases">
        <title>Complete sequence of chromosome 1 of Burkholderia cepacia AMMD.</title>
        <authorList>
            <person name="Copeland A."/>
            <person name="Lucas S."/>
            <person name="Lapidus A."/>
            <person name="Barry K."/>
            <person name="Detter J.C."/>
            <person name="Glavina del Rio T."/>
            <person name="Hammon N."/>
            <person name="Israni S."/>
            <person name="Pitluck S."/>
            <person name="Bruce D."/>
            <person name="Chain P."/>
            <person name="Malfatti S."/>
            <person name="Shin M."/>
            <person name="Vergez L."/>
            <person name="Schmutz J."/>
            <person name="Larimer F."/>
            <person name="Land M."/>
            <person name="Hauser L."/>
            <person name="Kyrpides N."/>
            <person name="Kim E."/>
            <person name="Parke J."/>
            <person name="Coenye T."/>
            <person name="Konstantinidis K."/>
            <person name="Ramette A."/>
            <person name="Tiedje J."/>
            <person name="Richardson P."/>
        </authorList>
    </citation>
    <scope>NUCLEOTIDE SEQUENCE [LARGE SCALE GENOMIC DNA]</scope>
    <source>
        <strain>ATCC BAA-244 / DSM 16087 / CCUG 44356 / LMG 19182 / AMMD</strain>
    </source>
</reference>
<protein>
    <recommendedName>
        <fullName evidence="1">ATP-dependent protease ATPase subunit HslU</fullName>
    </recommendedName>
    <alternativeName>
        <fullName evidence="1">Unfoldase HslU</fullName>
    </alternativeName>
</protein>
<keyword id="KW-0067">ATP-binding</keyword>
<keyword id="KW-0143">Chaperone</keyword>
<keyword id="KW-0963">Cytoplasm</keyword>
<keyword id="KW-0547">Nucleotide-binding</keyword>
<keyword id="KW-0346">Stress response</keyword>
<sequence>MSTMTPAEIVSELDKHIIGQAKAKKAVAVALRNRWRRQQVGEPLRQEITPKNILMIGPTGVGKTEIARRLAKLADAPFVKIEATKFTEVGYVGRDVDSIVRDLIEISVKQTREAEMRKVRTKATDQAEDRILDVLLPQPRAVGFGGNADHANDDNNATRQTFRKRLREGQLDDKEVELDLEQPSAGMDIMAPPGMEEMTEQIRSMFSNLGSGKKQRRKVKIKEALKLLTDEEAAKMLNDEEVKTKAVQNVEQNGIVFLDEIDKITSRNNEGSGGEVSRQGVQRDLLPLVEGTTVNTKYGMVKTDHILFIASGAFHLAKPSDLIPELQGRFPIRVELDSLSVEDFEAILDATDASLVKQYQALLATEDVQLEFAADGIRRLAEIAYAVNEKTENIGARRLYTVIEKLLEEVSFSAGNHAGERVTIDAKYVEHALGEVSQDEDLSRYVL</sequence>
<evidence type="ECO:0000255" key="1">
    <source>
        <dbReference type="HAMAP-Rule" id="MF_00249"/>
    </source>
</evidence>
<comment type="function">
    <text evidence="1">ATPase subunit of a proteasome-like degradation complex; this subunit has chaperone activity. The binding of ATP and its subsequent hydrolysis by HslU are essential for unfolding of protein substrates subsequently hydrolyzed by HslV. HslU recognizes the N-terminal part of its protein substrates and unfolds these before they are guided to HslV for hydrolysis.</text>
</comment>
<comment type="subunit">
    <text evidence="1">A double ring-shaped homohexamer of HslV is capped on each side by a ring-shaped HslU homohexamer. The assembly of the HslU/HslV complex is dependent on binding of ATP.</text>
</comment>
<comment type="subcellular location">
    <subcellularLocation>
        <location evidence="1">Cytoplasm</location>
    </subcellularLocation>
</comment>
<comment type="similarity">
    <text evidence="1">Belongs to the ClpX chaperone family. HslU subfamily.</text>
</comment>
<dbReference type="EMBL" id="CP000440">
    <property type="protein sequence ID" value="ABI88695.1"/>
    <property type="molecule type" value="Genomic_DNA"/>
</dbReference>
<dbReference type="RefSeq" id="WP_011658199.1">
    <property type="nucleotide sequence ID" value="NC_008390.1"/>
</dbReference>
<dbReference type="SMR" id="Q0BAX8"/>
<dbReference type="GeneID" id="93084665"/>
<dbReference type="KEGG" id="bam:Bamb_3139"/>
<dbReference type="PATRIC" id="fig|339670.21.peg.1720"/>
<dbReference type="eggNOG" id="COG1220">
    <property type="taxonomic scope" value="Bacteria"/>
</dbReference>
<dbReference type="Proteomes" id="UP000000662">
    <property type="component" value="Chromosome 1"/>
</dbReference>
<dbReference type="GO" id="GO:0009376">
    <property type="term" value="C:HslUV protease complex"/>
    <property type="evidence" value="ECO:0007669"/>
    <property type="project" value="UniProtKB-UniRule"/>
</dbReference>
<dbReference type="GO" id="GO:0005524">
    <property type="term" value="F:ATP binding"/>
    <property type="evidence" value="ECO:0007669"/>
    <property type="project" value="UniProtKB-UniRule"/>
</dbReference>
<dbReference type="GO" id="GO:0016887">
    <property type="term" value="F:ATP hydrolysis activity"/>
    <property type="evidence" value="ECO:0007669"/>
    <property type="project" value="InterPro"/>
</dbReference>
<dbReference type="GO" id="GO:0008233">
    <property type="term" value="F:peptidase activity"/>
    <property type="evidence" value="ECO:0007669"/>
    <property type="project" value="InterPro"/>
</dbReference>
<dbReference type="GO" id="GO:0036402">
    <property type="term" value="F:proteasome-activating activity"/>
    <property type="evidence" value="ECO:0007669"/>
    <property type="project" value="UniProtKB-UniRule"/>
</dbReference>
<dbReference type="GO" id="GO:0043335">
    <property type="term" value="P:protein unfolding"/>
    <property type="evidence" value="ECO:0007669"/>
    <property type="project" value="UniProtKB-UniRule"/>
</dbReference>
<dbReference type="GO" id="GO:0051603">
    <property type="term" value="P:proteolysis involved in protein catabolic process"/>
    <property type="evidence" value="ECO:0007669"/>
    <property type="project" value="TreeGrafter"/>
</dbReference>
<dbReference type="CDD" id="cd19498">
    <property type="entry name" value="RecA-like_HslU"/>
    <property type="match status" value="1"/>
</dbReference>
<dbReference type="FunFam" id="3.40.50.300:FF:000213">
    <property type="entry name" value="ATP-dependent protease ATPase subunit HslU"/>
    <property type="match status" value="1"/>
</dbReference>
<dbReference type="FunFam" id="3.40.50.300:FF:000220">
    <property type="entry name" value="ATP-dependent protease ATPase subunit HslU"/>
    <property type="match status" value="1"/>
</dbReference>
<dbReference type="Gene3D" id="1.10.8.60">
    <property type="match status" value="1"/>
</dbReference>
<dbReference type="Gene3D" id="3.40.50.300">
    <property type="entry name" value="P-loop containing nucleotide triphosphate hydrolases"/>
    <property type="match status" value="2"/>
</dbReference>
<dbReference type="HAMAP" id="MF_00249">
    <property type="entry name" value="HslU"/>
    <property type="match status" value="1"/>
</dbReference>
<dbReference type="InterPro" id="IPR003593">
    <property type="entry name" value="AAA+_ATPase"/>
</dbReference>
<dbReference type="InterPro" id="IPR050052">
    <property type="entry name" value="ATP-dep_Clp_protease_ClpX"/>
</dbReference>
<dbReference type="InterPro" id="IPR003959">
    <property type="entry name" value="ATPase_AAA_core"/>
</dbReference>
<dbReference type="InterPro" id="IPR019489">
    <property type="entry name" value="Clp_ATPase_C"/>
</dbReference>
<dbReference type="InterPro" id="IPR004491">
    <property type="entry name" value="HslU"/>
</dbReference>
<dbReference type="InterPro" id="IPR027417">
    <property type="entry name" value="P-loop_NTPase"/>
</dbReference>
<dbReference type="NCBIfam" id="TIGR00390">
    <property type="entry name" value="hslU"/>
    <property type="match status" value="1"/>
</dbReference>
<dbReference type="NCBIfam" id="NF003544">
    <property type="entry name" value="PRK05201.1"/>
    <property type="match status" value="1"/>
</dbReference>
<dbReference type="PANTHER" id="PTHR48102">
    <property type="entry name" value="ATP-DEPENDENT CLP PROTEASE ATP-BINDING SUBUNIT CLPX-LIKE, MITOCHONDRIAL-RELATED"/>
    <property type="match status" value="1"/>
</dbReference>
<dbReference type="PANTHER" id="PTHR48102:SF3">
    <property type="entry name" value="ATP-DEPENDENT PROTEASE ATPASE SUBUNIT HSLU"/>
    <property type="match status" value="1"/>
</dbReference>
<dbReference type="Pfam" id="PF00004">
    <property type="entry name" value="AAA"/>
    <property type="match status" value="1"/>
</dbReference>
<dbReference type="Pfam" id="PF07724">
    <property type="entry name" value="AAA_2"/>
    <property type="match status" value="1"/>
</dbReference>
<dbReference type="SMART" id="SM00382">
    <property type="entry name" value="AAA"/>
    <property type="match status" value="1"/>
</dbReference>
<dbReference type="SMART" id="SM01086">
    <property type="entry name" value="ClpB_D2-small"/>
    <property type="match status" value="1"/>
</dbReference>
<dbReference type="SUPFAM" id="SSF52540">
    <property type="entry name" value="P-loop containing nucleoside triphosphate hydrolases"/>
    <property type="match status" value="1"/>
</dbReference>
<proteinExistence type="inferred from homology"/>
<gene>
    <name evidence="1" type="primary">hslU</name>
    <name type="ordered locus">Bamb_3139</name>
</gene>